<name>GSA2_GEOTN</name>
<sequence length="429" mass="46688">MRSYERSKAAYEEAVTLMPGGVNSPVRAFKSVGMTPIFMARGQGAKIYDIDGNEYIDYVLSWGPLILGHADPQVVEALKRVAEQGTSFGAPTLLENELAKLVIERVPSVEIVRMVNSGTEATMSALRLARGYTKRNKIIKFEGSYHGHGDSLLIKAGSGVATLGLPDSPGVPQSVAQHTITVPYNDLDSVRYAFERFGEDIAAVIVEPVAGNMGVVPPVPGFLEGLRDVTKQYGALLIFDEVMTGFRVDYHCAQGYYGVEPDLTCLGKVIGGGLPVGAYGGKAEIMEQVAPSGPVYQAGTLSGNPLAMTAGYETLRQLTPETYKEFRRKAARLEEGLHQAAEKYEIPHTINRAGSMIGFFFTNEPVINYETAKTSDLELFAAYYREMANEGIFLPPSQFEGLFLSTAHSDEDIEYTIAAAERVFARLRG</sequence>
<evidence type="ECO:0000255" key="1">
    <source>
        <dbReference type="HAMAP-Rule" id="MF_00375"/>
    </source>
</evidence>
<comment type="catalytic activity">
    <reaction evidence="1">
        <text>(S)-4-amino-5-oxopentanoate = 5-aminolevulinate</text>
        <dbReference type="Rhea" id="RHEA:14265"/>
        <dbReference type="ChEBI" id="CHEBI:57501"/>
        <dbReference type="ChEBI" id="CHEBI:356416"/>
        <dbReference type="EC" id="5.4.3.8"/>
    </reaction>
</comment>
<comment type="cofactor">
    <cofactor evidence="1">
        <name>pyridoxal 5'-phosphate</name>
        <dbReference type="ChEBI" id="CHEBI:597326"/>
    </cofactor>
</comment>
<comment type="pathway">
    <text evidence="1">Porphyrin-containing compound metabolism; protoporphyrin-IX biosynthesis; 5-aminolevulinate from L-glutamyl-tRNA(Glu): step 2/2.</text>
</comment>
<comment type="subunit">
    <text evidence="1">Homodimer.</text>
</comment>
<comment type="subcellular location">
    <subcellularLocation>
        <location evidence="1">Cytoplasm</location>
    </subcellularLocation>
</comment>
<comment type="similarity">
    <text evidence="1">Belongs to the class-III pyridoxal-phosphate-dependent aminotransferase family. HemL subfamily.</text>
</comment>
<proteinExistence type="inferred from homology"/>
<gene>
    <name evidence="1" type="primary">hemL2</name>
    <name type="ordered locus">GTNG_2571</name>
</gene>
<accession>A4IRG2</accession>
<protein>
    <recommendedName>
        <fullName evidence="1">Glutamate-1-semialdehyde 2,1-aminomutase 2</fullName>
        <shortName evidence="1">GSA 2</shortName>
        <ecNumber evidence="1">5.4.3.8</ecNumber>
    </recommendedName>
    <alternativeName>
        <fullName evidence="1">Glutamate-1-semialdehyde aminotransferase 2</fullName>
        <shortName evidence="1">GSA-AT 2</shortName>
    </alternativeName>
</protein>
<dbReference type="EC" id="5.4.3.8" evidence="1"/>
<dbReference type="EMBL" id="CP000557">
    <property type="protein sequence ID" value="ABO67916.1"/>
    <property type="molecule type" value="Genomic_DNA"/>
</dbReference>
<dbReference type="RefSeq" id="WP_008881100.1">
    <property type="nucleotide sequence ID" value="NC_009328.1"/>
</dbReference>
<dbReference type="SMR" id="A4IRG2"/>
<dbReference type="GeneID" id="87623281"/>
<dbReference type="KEGG" id="gtn:GTNG_2571"/>
<dbReference type="eggNOG" id="COG0001">
    <property type="taxonomic scope" value="Bacteria"/>
</dbReference>
<dbReference type="HOGENOM" id="CLU_016922_1_5_9"/>
<dbReference type="UniPathway" id="UPA00251">
    <property type="reaction ID" value="UER00317"/>
</dbReference>
<dbReference type="Proteomes" id="UP000001578">
    <property type="component" value="Chromosome"/>
</dbReference>
<dbReference type="GO" id="GO:0005737">
    <property type="term" value="C:cytoplasm"/>
    <property type="evidence" value="ECO:0007669"/>
    <property type="project" value="UniProtKB-SubCell"/>
</dbReference>
<dbReference type="GO" id="GO:0042286">
    <property type="term" value="F:glutamate-1-semialdehyde 2,1-aminomutase activity"/>
    <property type="evidence" value="ECO:0007669"/>
    <property type="project" value="UniProtKB-UniRule"/>
</dbReference>
<dbReference type="GO" id="GO:0030170">
    <property type="term" value="F:pyridoxal phosphate binding"/>
    <property type="evidence" value="ECO:0007669"/>
    <property type="project" value="InterPro"/>
</dbReference>
<dbReference type="GO" id="GO:0008483">
    <property type="term" value="F:transaminase activity"/>
    <property type="evidence" value="ECO:0007669"/>
    <property type="project" value="InterPro"/>
</dbReference>
<dbReference type="GO" id="GO:0006782">
    <property type="term" value="P:protoporphyrinogen IX biosynthetic process"/>
    <property type="evidence" value="ECO:0007669"/>
    <property type="project" value="UniProtKB-UniRule"/>
</dbReference>
<dbReference type="CDD" id="cd00610">
    <property type="entry name" value="OAT_like"/>
    <property type="match status" value="1"/>
</dbReference>
<dbReference type="FunFam" id="3.40.640.10:FF:000021">
    <property type="entry name" value="Glutamate-1-semialdehyde 2,1-aminomutase"/>
    <property type="match status" value="1"/>
</dbReference>
<dbReference type="Gene3D" id="3.90.1150.10">
    <property type="entry name" value="Aspartate Aminotransferase, domain 1"/>
    <property type="match status" value="1"/>
</dbReference>
<dbReference type="Gene3D" id="3.40.640.10">
    <property type="entry name" value="Type I PLP-dependent aspartate aminotransferase-like (Major domain)"/>
    <property type="match status" value="1"/>
</dbReference>
<dbReference type="HAMAP" id="MF_00375">
    <property type="entry name" value="HemL_aminotrans_3"/>
    <property type="match status" value="1"/>
</dbReference>
<dbReference type="InterPro" id="IPR004639">
    <property type="entry name" value="4pyrrol_synth_GluAld_NH2Trfase"/>
</dbReference>
<dbReference type="InterPro" id="IPR005814">
    <property type="entry name" value="Aminotrans_3"/>
</dbReference>
<dbReference type="InterPro" id="IPR049704">
    <property type="entry name" value="Aminotrans_3_PPA_site"/>
</dbReference>
<dbReference type="InterPro" id="IPR015424">
    <property type="entry name" value="PyrdxlP-dep_Trfase"/>
</dbReference>
<dbReference type="InterPro" id="IPR015421">
    <property type="entry name" value="PyrdxlP-dep_Trfase_major"/>
</dbReference>
<dbReference type="InterPro" id="IPR015422">
    <property type="entry name" value="PyrdxlP-dep_Trfase_small"/>
</dbReference>
<dbReference type="NCBIfam" id="TIGR00713">
    <property type="entry name" value="hemL"/>
    <property type="match status" value="1"/>
</dbReference>
<dbReference type="NCBIfam" id="NF000818">
    <property type="entry name" value="PRK00062.1"/>
    <property type="match status" value="1"/>
</dbReference>
<dbReference type="PANTHER" id="PTHR43713">
    <property type="entry name" value="GLUTAMATE-1-SEMIALDEHYDE 2,1-AMINOMUTASE"/>
    <property type="match status" value="1"/>
</dbReference>
<dbReference type="PANTHER" id="PTHR43713:SF3">
    <property type="entry name" value="GLUTAMATE-1-SEMIALDEHYDE 2,1-AMINOMUTASE 1, CHLOROPLASTIC-RELATED"/>
    <property type="match status" value="1"/>
</dbReference>
<dbReference type="Pfam" id="PF00202">
    <property type="entry name" value="Aminotran_3"/>
    <property type="match status" value="1"/>
</dbReference>
<dbReference type="SUPFAM" id="SSF53383">
    <property type="entry name" value="PLP-dependent transferases"/>
    <property type="match status" value="1"/>
</dbReference>
<dbReference type="PROSITE" id="PS00600">
    <property type="entry name" value="AA_TRANSFER_CLASS_3"/>
    <property type="match status" value="1"/>
</dbReference>
<organism>
    <name type="scientific">Geobacillus thermodenitrificans (strain NG80-2)</name>
    <dbReference type="NCBI Taxonomy" id="420246"/>
    <lineage>
        <taxon>Bacteria</taxon>
        <taxon>Bacillati</taxon>
        <taxon>Bacillota</taxon>
        <taxon>Bacilli</taxon>
        <taxon>Bacillales</taxon>
        <taxon>Anoxybacillaceae</taxon>
        <taxon>Geobacillus</taxon>
    </lineage>
</organism>
<reference key="1">
    <citation type="journal article" date="2007" name="Proc. Natl. Acad. Sci. U.S.A.">
        <title>Genome and proteome of long-chain alkane degrading Geobacillus thermodenitrificans NG80-2 isolated from a deep-subsurface oil reservoir.</title>
        <authorList>
            <person name="Feng L."/>
            <person name="Wang W."/>
            <person name="Cheng J."/>
            <person name="Ren Y."/>
            <person name="Zhao G."/>
            <person name="Gao C."/>
            <person name="Tang Y."/>
            <person name="Liu X."/>
            <person name="Han W."/>
            <person name="Peng X."/>
            <person name="Liu R."/>
            <person name="Wang L."/>
        </authorList>
    </citation>
    <scope>NUCLEOTIDE SEQUENCE [LARGE SCALE GENOMIC DNA]</scope>
    <source>
        <strain>NG80-2</strain>
    </source>
</reference>
<keyword id="KW-0963">Cytoplasm</keyword>
<keyword id="KW-0413">Isomerase</keyword>
<keyword id="KW-0627">Porphyrin biosynthesis</keyword>
<keyword id="KW-0663">Pyridoxal phosphate</keyword>
<feature type="chain" id="PRO_0000382320" description="Glutamate-1-semialdehyde 2,1-aminomutase 2">
    <location>
        <begin position="1"/>
        <end position="429"/>
    </location>
</feature>
<feature type="modified residue" description="N6-(pyridoxal phosphate)lysine" evidence="1">
    <location>
        <position position="268"/>
    </location>
</feature>